<feature type="chain" id="PRO_1000072925" description="Imidazole glycerol phosphate synthase subunit HisF">
    <location>
        <begin position="1"/>
        <end position="251"/>
    </location>
</feature>
<feature type="active site" evidence="1">
    <location>
        <position position="11"/>
    </location>
</feature>
<feature type="active site" evidence="1">
    <location>
        <position position="130"/>
    </location>
</feature>
<keyword id="KW-0028">Amino-acid biosynthesis</keyword>
<keyword id="KW-0963">Cytoplasm</keyword>
<keyword id="KW-0368">Histidine biosynthesis</keyword>
<keyword id="KW-0456">Lyase</keyword>
<keyword id="KW-1185">Reference proteome</keyword>
<gene>
    <name evidence="1" type="primary">hisF</name>
    <name type="ordered locus">Msed_1946</name>
</gene>
<comment type="function">
    <text evidence="1">IGPS catalyzes the conversion of PRFAR and glutamine to IGP, AICAR and glutamate. The HisF subunit catalyzes the cyclization activity that produces IGP and AICAR from PRFAR using the ammonia provided by the HisH subunit.</text>
</comment>
<comment type="catalytic activity">
    <reaction evidence="1">
        <text>5-[(5-phospho-1-deoxy-D-ribulos-1-ylimino)methylamino]-1-(5-phospho-beta-D-ribosyl)imidazole-4-carboxamide + L-glutamine = D-erythro-1-(imidazol-4-yl)glycerol 3-phosphate + 5-amino-1-(5-phospho-beta-D-ribosyl)imidazole-4-carboxamide + L-glutamate + H(+)</text>
        <dbReference type="Rhea" id="RHEA:24793"/>
        <dbReference type="ChEBI" id="CHEBI:15378"/>
        <dbReference type="ChEBI" id="CHEBI:29985"/>
        <dbReference type="ChEBI" id="CHEBI:58278"/>
        <dbReference type="ChEBI" id="CHEBI:58359"/>
        <dbReference type="ChEBI" id="CHEBI:58475"/>
        <dbReference type="ChEBI" id="CHEBI:58525"/>
        <dbReference type="EC" id="4.3.2.10"/>
    </reaction>
</comment>
<comment type="pathway">
    <text evidence="1">Amino-acid biosynthesis; L-histidine biosynthesis; L-histidine from 5-phospho-alpha-D-ribose 1-diphosphate: step 5/9.</text>
</comment>
<comment type="subunit">
    <text evidence="1">Heterodimer of HisH and HisF.</text>
</comment>
<comment type="subcellular location">
    <subcellularLocation>
        <location evidence="1">Cytoplasm</location>
    </subcellularLocation>
</comment>
<comment type="similarity">
    <text evidence="1">Belongs to the HisA/HisF family.</text>
</comment>
<reference key="1">
    <citation type="journal article" date="2008" name="Appl. Environ. Microbiol.">
        <title>The genome sequence of the metal-mobilizing, extremely thermoacidophilic archaeon Metallosphaera sedula provides insights into bioleaching-associated metabolism.</title>
        <authorList>
            <person name="Auernik K.S."/>
            <person name="Maezato Y."/>
            <person name="Blum P.H."/>
            <person name="Kelly R.M."/>
        </authorList>
    </citation>
    <scope>NUCLEOTIDE SEQUENCE [LARGE SCALE GENOMIC DNA]</scope>
    <source>
        <strain>ATCC 51363 / DSM 5348 / JCM 9185 / NBRC 15509 / TH2</strain>
    </source>
</reference>
<protein>
    <recommendedName>
        <fullName evidence="1">Imidazole glycerol phosphate synthase subunit HisF</fullName>
        <ecNumber evidence="1">4.3.2.10</ecNumber>
    </recommendedName>
    <alternativeName>
        <fullName evidence="1">IGP synthase cyclase subunit</fullName>
    </alternativeName>
    <alternativeName>
        <fullName evidence="1">IGP synthase subunit HisF</fullName>
    </alternativeName>
    <alternativeName>
        <fullName evidence="1">ImGP synthase subunit HisF</fullName>
        <shortName evidence="1">IGPS subunit HisF</shortName>
    </alternativeName>
</protein>
<dbReference type="EC" id="4.3.2.10" evidence="1"/>
<dbReference type="EMBL" id="CP000682">
    <property type="protein sequence ID" value="ABP96086.1"/>
    <property type="molecule type" value="Genomic_DNA"/>
</dbReference>
<dbReference type="RefSeq" id="WP_012021873.1">
    <property type="nucleotide sequence ID" value="NC_009440.1"/>
</dbReference>
<dbReference type="SMR" id="A4YI34"/>
<dbReference type="STRING" id="399549.Msed_1946"/>
<dbReference type="GeneID" id="91756478"/>
<dbReference type="KEGG" id="mse:Msed_1946"/>
<dbReference type="eggNOG" id="arCOG00617">
    <property type="taxonomic scope" value="Archaea"/>
</dbReference>
<dbReference type="HOGENOM" id="CLU_048577_4_0_2"/>
<dbReference type="UniPathway" id="UPA00031">
    <property type="reaction ID" value="UER00010"/>
</dbReference>
<dbReference type="Proteomes" id="UP000000242">
    <property type="component" value="Chromosome"/>
</dbReference>
<dbReference type="GO" id="GO:0005737">
    <property type="term" value="C:cytoplasm"/>
    <property type="evidence" value="ECO:0007669"/>
    <property type="project" value="UniProtKB-SubCell"/>
</dbReference>
<dbReference type="GO" id="GO:0000107">
    <property type="term" value="F:imidazoleglycerol-phosphate synthase activity"/>
    <property type="evidence" value="ECO:0007669"/>
    <property type="project" value="UniProtKB-UniRule"/>
</dbReference>
<dbReference type="GO" id="GO:0016829">
    <property type="term" value="F:lyase activity"/>
    <property type="evidence" value="ECO:0007669"/>
    <property type="project" value="UniProtKB-KW"/>
</dbReference>
<dbReference type="GO" id="GO:0000105">
    <property type="term" value="P:L-histidine biosynthetic process"/>
    <property type="evidence" value="ECO:0007669"/>
    <property type="project" value="UniProtKB-UniRule"/>
</dbReference>
<dbReference type="CDD" id="cd04731">
    <property type="entry name" value="HisF"/>
    <property type="match status" value="1"/>
</dbReference>
<dbReference type="FunFam" id="3.20.20.70:FF:000006">
    <property type="entry name" value="Imidazole glycerol phosphate synthase subunit HisF"/>
    <property type="match status" value="1"/>
</dbReference>
<dbReference type="Gene3D" id="3.20.20.70">
    <property type="entry name" value="Aldolase class I"/>
    <property type="match status" value="1"/>
</dbReference>
<dbReference type="HAMAP" id="MF_01013">
    <property type="entry name" value="HisF"/>
    <property type="match status" value="1"/>
</dbReference>
<dbReference type="InterPro" id="IPR013785">
    <property type="entry name" value="Aldolase_TIM"/>
</dbReference>
<dbReference type="InterPro" id="IPR006062">
    <property type="entry name" value="His_biosynth"/>
</dbReference>
<dbReference type="InterPro" id="IPR004651">
    <property type="entry name" value="HisF"/>
</dbReference>
<dbReference type="InterPro" id="IPR050064">
    <property type="entry name" value="IGPS_HisA/HisF"/>
</dbReference>
<dbReference type="InterPro" id="IPR011060">
    <property type="entry name" value="RibuloseP-bd_barrel"/>
</dbReference>
<dbReference type="NCBIfam" id="TIGR00735">
    <property type="entry name" value="hisF"/>
    <property type="match status" value="1"/>
</dbReference>
<dbReference type="PANTHER" id="PTHR21235:SF2">
    <property type="entry name" value="IMIDAZOLE GLYCEROL PHOSPHATE SYNTHASE HISHF"/>
    <property type="match status" value="1"/>
</dbReference>
<dbReference type="PANTHER" id="PTHR21235">
    <property type="entry name" value="IMIDAZOLE GLYCEROL PHOSPHATE SYNTHASE SUBUNIT HISF/H IGP SYNTHASE SUBUNIT HISF/H"/>
    <property type="match status" value="1"/>
</dbReference>
<dbReference type="Pfam" id="PF00977">
    <property type="entry name" value="His_biosynth"/>
    <property type="match status" value="1"/>
</dbReference>
<dbReference type="SUPFAM" id="SSF51366">
    <property type="entry name" value="Ribulose-phoshate binding barrel"/>
    <property type="match status" value="1"/>
</dbReference>
<sequence length="251" mass="26810">MTTRRIIACLDVKDGKVVKGVRFLDLKLKGDPAELASRYEEEGADEIVFLDISATVEGRKTLLEKVRETASVLSIPLTVGGGVRTVEDVSNLLSNGADKVSLNTVAAENPSVVSMASREFGAQAVVVAIDAKRVGNGWRVFVRSGTKDTGLDAVDWAKRVEEMGAGEILLTSIDRDGTRDGYDLELTKAVVRATKVPVIASGGAGKPDHFLSVFRQAGADAALAAGIFHDGVIRIRELKDYLKDAGIEVRT</sequence>
<name>HIS6_METS5</name>
<evidence type="ECO:0000255" key="1">
    <source>
        <dbReference type="HAMAP-Rule" id="MF_01013"/>
    </source>
</evidence>
<organism>
    <name type="scientific">Metallosphaera sedula (strain ATCC 51363 / DSM 5348 / JCM 9185 / NBRC 15509 / TH2)</name>
    <dbReference type="NCBI Taxonomy" id="399549"/>
    <lineage>
        <taxon>Archaea</taxon>
        <taxon>Thermoproteota</taxon>
        <taxon>Thermoprotei</taxon>
        <taxon>Sulfolobales</taxon>
        <taxon>Sulfolobaceae</taxon>
        <taxon>Metallosphaera</taxon>
    </lineage>
</organism>
<accession>A4YI34</accession>
<proteinExistence type="inferred from homology"/>